<organism>
    <name type="scientific">Salmonella typhi</name>
    <dbReference type="NCBI Taxonomy" id="90370"/>
    <lineage>
        <taxon>Bacteria</taxon>
        <taxon>Pseudomonadati</taxon>
        <taxon>Pseudomonadota</taxon>
        <taxon>Gammaproteobacteria</taxon>
        <taxon>Enterobacterales</taxon>
        <taxon>Enterobacteriaceae</taxon>
        <taxon>Salmonella</taxon>
    </lineage>
</organism>
<gene>
    <name type="primary">rsuA</name>
    <name type="ordered locus">STY2459</name>
    <name type="ordered locus">t0632</name>
</gene>
<dbReference type="EC" id="5.4.99.19"/>
<dbReference type="EMBL" id="AL513382">
    <property type="protein sequence ID" value="CAD02605.1"/>
    <property type="molecule type" value="Genomic_DNA"/>
</dbReference>
<dbReference type="EMBL" id="AE014613">
    <property type="protein sequence ID" value="AAO68333.1"/>
    <property type="molecule type" value="Genomic_DNA"/>
</dbReference>
<dbReference type="RefSeq" id="NP_456780.1">
    <property type="nucleotide sequence ID" value="NC_003198.1"/>
</dbReference>
<dbReference type="RefSeq" id="WP_001234836.1">
    <property type="nucleotide sequence ID" value="NZ_WSUR01000002.1"/>
</dbReference>
<dbReference type="SMR" id="P65841"/>
<dbReference type="STRING" id="220341.gene:17586360"/>
<dbReference type="KEGG" id="stt:t0632"/>
<dbReference type="KEGG" id="sty:STY2459"/>
<dbReference type="PATRIC" id="fig|220341.7.peg.2487"/>
<dbReference type="eggNOG" id="COG1187">
    <property type="taxonomic scope" value="Bacteria"/>
</dbReference>
<dbReference type="HOGENOM" id="CLU_024979_1_2_6"/>
<dbReference type="OMA" id="QGKYHQV"/>
<dbReference type="OrthoDB" id="9807213at2"/>
<dbReference type="Proteomes" id="UP000000541">
    <property type="component" value="Chromosome"/>
</dbReference>
<dbReference type="Proteomes" id="UP000002670">
    <property type="component" value="Chromosome"/>
</dbReference>
<dbReference type="GO" id="GO:0160136">
    <property type="term" value="F:16S rRNA pseudouridine(516) synthase activity"/>
    <property type="evidence" value="ECO:0007669"/>
    <property type="project" value="UniProtKB-EC"/>
</dbReference>
<dbReference type="GO" id="GO:0003723">
    <property type="term" value="F:RNA binding"/>
    <property type="evidence" value="ECO:0007669"/>
    <property type="project" value="UniProtKB-KW"/>
</dbReference>
<dbReference type="GO" id="GO:0000455">
    <property type="term" value="P:enzyme-directed rRNA pseudouridine synthesis"/>
    <property type="evidence" value="ECO:0007669"/>
    <property type="project" value="UniProtKB-ARBA"/>
</dbReference>
<dbReference type="CDD" id="cd02553">
    <property type="entry name" value="PseudoU_synth_RsuA"/>
    <property type="match status" value="1"/>
</dbReference>
<dbReference type="CDD" id="cd00165">
    <property type="entry name" value="S4"/>
    <property type="match status" value="1"/>
</dbReference>
<dbReference type="FunFam" id="3.10.290.10:FF:000009">
    <property type="entry name" value="Pseudouridine synthase"/>
    <property type="match status" value="1"/>
</dbReference>
<dbReference type="FunFam" id="3.30.70.1560:FF:000001">
    <property type="entry name" value="Pseudouridine synthase"/>
    <property type="match status" value="1"/>
</dbReference>
<dbReference type="FunFam" id="3.30.70.580:FF:000004">
    <property type="entry name" value="Pseudouridine synthase"/>
    <property type="match status" value="1"/>
</dbReference>
<dbReference type="Gene3D" id="3.30.70.1560">
    <property type="entry name" value="Alpha-L RNA-binding motif"/>
    <property type="match status" value="1"/>
</dbReference>
<dbReference type="Gene3D" id="3.30.70.580">
    <property type="entry name" value="Pseudouridine synthase I, catalytic domain, N-terminal subdomain"/>
    <property type="match status" value="1"/>
</dbReference>
<dbReference type="Gene3D" id="3.10.290.10">
    <property type="entry name" value="RNA-binding S4 domain"/>
    <property type="match status" value="1"/>
</dbReference>
<dbReference type="InterPro" id="IPR042092">
    <property type="entry name" value="PsdUridine_s_RsuA/RluB/E/F_cat"/>
</dbReference>
<dbReference type="InterPro" id="IPR020103">
    <property type="entry name" value="PsdUridine_synth_cat_dom_sf"/>
</dbReference>
<dbReference type="InterPro" id="IPR006145">
    <property type="entry name" value="PsdUridine_synth_RsuA/RluA"/>
</dbReference>
<dbReference type="InterPro" id="IPR000748">
    <property type="entry name" value="PsdUridine_synth_RsuA/RluB/E/F"/>
</dbReference>
<dbReference type="InterPro" id="IPR018496">
    <property type="entry name" value="PsdUridine_synth_RsuA/RluB_CS"/>
</dbReference>
<dbReference type="InterPro" id="IPR050343">
    <property type="entry name" value="RsuA_PseudoU_synthase"/>
</dbReference>
<dbReference type="InterPro" id="IPR002942">
    <property type="entry name" value="S4_RNA-bd"/>
</dbReference>
<dbReference type="InterPro" id="IPR036986">
    <property type="entry name" value="S4_RNA-bd_sf"/>
</dbReference>
<dbReference type="InterPro" id="IPR020094">
    <property type="entry name" value="TruA/RsuA/RluB/E/F_N"/>
</dbReference>
<dbReference type="NCBIfam" id="NF008097">
    <property type="entry name" value="PRK10839.1"/>
    <property type="match status" value="1"/>
</dbReference>
<dbReference type="NCBIfam" id="TIGR00093">
    <property type="entry name" value="pseudouridine synthase"/>
    <property type="match status" value="1"/>
</dbReference>
<dbReference type="PANTHER" id="PTHR47683:SF4">
    <property type="entry name" value="PSEUDOURIDINE SYNTHASE"/>
    <property type="match status" value="1"/>
</dbReference>
<dbReference type="PANTHER" id="PTHR47683">
    <property type="entry name" value="PSEUDOURIDINE SYNTHASE FAMILY PROTEIN-RELATED"/>
    <property type="match status" value="1"/>
</dbReference>
<dbReference type="Pfam" id="PF00849">
    <property type="entry name" value="PseudoU_synth_2"/>
    <property type="match status" value="1"/>
</dbReference>
<dbReference type="Pfam" id="PF01479">
    <property type="entry name" value="S4"/>
    <property type="match status" value="1"/>
</dbReference>
<dbReference type="SMART" id="SM00363">
    <property type="entry name" value="S4"/>
    <property type="match status" value="1"/>
</dbReference>
<dbReference type="SUPFAM" id="SSF55174">
    <property type="entry name" value="Alpha-L RNA-binding motif"/>
    <property type="match status" value="1"/>
</dbReference>
<dbReference type="SUPFAM" id="SSF55120">
    <property type="entry name" value="Pseudouridine synthase"/>
    <property type="match status" value="1"/>
</dbReference>
<dbReference type="PROSITE" id="PS01149">
    <property type="entry name" value="PSI_RSU"/>
    <property type="match status" value="1"/>
</dbReference>
<dbReference type="PROSITE" id="PS50889">
    <property type="entry name" value="S4"/>
    <property type="match status" value="1"/>
</dbReference>
<keyword id="KW-0413">Isomerase</keyword>
<keyword id="KW-0694">RNA-binding</keyword>
<keyword id="KW-0698">rRNA processing</keyword>
<accession>P65841</accession>
<accession>Q8XGP8</accession>
<feature type="chain" id="PRO_0000099972" description="Ribosomal small subunit pseudouridine synthase A">
    <location>
        <begin position="1"/>
        <end position="231"/>
    </location>
</feature>
<feature type="domain" description="S4 RNA-binding" evidence="2">
    <location>
        <begin position="1"/>
        <end position="68"/>
    </location>
</feature>
<feature type="active site" description="Nucleophile" evidence="1">
    <location>
        <position position="102"/>
    </location>
</feature>
<sequence length="231" mass="25760">MRLDKFIAQQLGVSRAIAGREIRGNRVTVDGDIIKNAAFKLLPEHAVAYDGNPLAQQHGPRYFMLNKPQGYVCSTDDPDHPTVLYFLDEPVAYKLHAAGRLDIDTTGLVLMTDDGQWSHRITSPRHHCEKTYLVTLESPVADDTAAQFAKGVQLHNEKDLTKPATLEVITPVQVRLTISEGRYHQVKRMFAAVGNRVVELHRERIGAITLDENLAPGEYRPLTEEEIASVG</sequence>
<evidence type="ECO:0000250" key="1"/>
<evidence type="ECO:0000255" key="2">
    <source>
        <dbReference type="PROSITE-ProRule" id="PRU00182"/>
    </source>
</evidence>
<evidence type="ECO:0000305" key="3"/>
<protein>
    <recommendedName>
        <fullName>Ribosomal small subunit pseudouridine synthase A</fullName>
        <ecNumber>5.4.99.19</ecNumber>
    </recommendedName>
    <alternativeName>
        <fullName>16S pseudouridylate 516 synthase</fullName>
    </alternativeName>
    <alternativeName>
        <fullName>16S rRNA pseudouridine(516) synthase</fullName>
    </alternativeName>
    <alternativeName>
        <fullName>rRNA pseudouridylate synthase A</fullName>
    </alternativeName>
    <alternativeName>
        <fullName>rRNA-uridine isomerase A</fullName>
    </alternativeName>
</protein>
<name>RSUA_SALTI</name>
<comment type="function">
    <text evidence="1">Responsible for synthesis of pseudouridine from uracil-516 in 16S ribosomal RNA.</text>
</comment>
<comment type="catalytic activity">
    <reaction>
        <text>uridine(516) in 16S rRNA = pseudouridine(516) in 16S rRNA</text>
        <dbReference type="Rhea" id="RHEA:38867"/>
        <dbReference type="Rhea" id="RHEA-COMP:10089"/>
        <dbReference type="Rhea" id="RHEA-COMP:10090"/>
        <dbReference type="ChEBI" id="CHEBI:65314"/>
        <dbReference type="ChEBI" id="CHEBI:65315"/>
        <dbReference type="EC" id="5.4.99.19"/>
    </reaction>
</comment>
<comment type="subunit">
    <text evidence="1">Monomer.</text>
</comment>
<comment type="similarity">
    <text evidence="3">Belongs to the pseudouridine synthase RsuA family.</text>
</comment>
<reference key="1">
    <citation type="journal article" date="2001" name="Nature">
        <title>Complete genome sequence of a multiple drug resistant Salmonella enterica serovar Typhi CT18.</title>
        <authorList>
            <person name="Parkhill J."/>
            <person name="Dougan G."/>
            <person name="James K.D."/>
            <person name="Thomson N.R."/>
            <person name="Pickard D."/>
            <person name="Wain J."/>
            <person name="Churcher C.M."/>
            <person name="Mungall K.L."/>
            <person name="Bentley S.D."/>
            <person name="Holden M.T.G."/>
            <person name="Sebaihia M."/>
            <person name="Baker S."/>
            <person name="Basham D."/>
            <person name="Brooks K."/>
            <person name="Chillingworth T."/>
            <person name="Connerton P."/>
            <person name="Cronin A."/>
            <person name="Davis P."/>
            <person name="Davies R.M."/>
            <person name="Dowd L."/>
            <person name="White N."/>
            <person name="Farrar J."/>
            <person name="Feltwell T."/>
            <person name="Hamlin N."/>
            <person name="Haque A."/>
            <person name="Hien T.T."/>
            <person name="Holroyd S."/>
            <person name="Jagels K."/>
            <person name="Krogh A."/>
            <person name="Larsen T.S."/>
            <person name="Leather S."/>
            <person name="Moule S."/>
            <person name="O'Gaora P."/>
            <person name="Parry C."/>
            <person name="Quail M.A."/>
            <person name="Rutherford K.M."/>
            <person name="Simmonds M."/>
            <person name="Skelton J."/>
            <person name="Stevens K."/>
            <person name="Whitehead S."/>
            <person name="Barrell B.G."/>
        </authorList>
    </citation>
    <scope>NUCLEOTIDE SEQUENCE [LARGE SCALE GENOMIC DNA]</scope>
    <source>
        <strain>CT18</strain>
    </source>
</reference>
<reference key="2">
    <citation type="journal article" date="2003" name="J. Bacteriol.">
        <title>Comparative genomics of Salmonella enterica serovar Typhi strains Ty2 and CT18.</title>
        <authorList>
            <person name="Deng W."/>
            <person name="Liou S.-R."/>
            <person name="Plunkett G. III"/>
            <person name="Mayhew G.F."/>
            <person name="Rose D.J."/>
            <person name="Burland V."/>
            <person name="Kodoyianni V."/>
            <person name="Schwartz D.C."/>
            <person name="Blattner F.R."/>
        </authorList>
    </citation>
    <scope>NUCLEOTIDE SEQUENCE [LARGE SCALE GENOMIC DNA]</scope>
    <source>
        <strain>ATCC 700931 / Ty2</strain>
    </source>
</reference>
<proteinExistence type="inferred from homology"/>